<proteinExistence type="inferred from homology"/>
<accession>Q0S2X1</accession>
<sequence>METVSLSLWNAPRAEAPVVATVALPGSKSITNRALILAALADGPSTLTGALRSRDTDLMIEALRTLGISIETVGADTTLRVTPGPLQGGAVDCGLAGTVMRFLPPVAALASGTVHFDGDEQARTRPLDTILDALRGLGADIDGASLPFTVRGAGSLRGGRVTIDASGSSQFVSGLLLSAAAFDEGVTVHHDGKTVPSMPHIDMTVEMLRESGVEVTTPATGGEADTWRVSPGVVRAVDRAIEPDLSNATAFLAAAAVTGGEVTVPLWPSRTTQPGDAIREILLAMGADVRLDGANLTVRGPQQLTGIDIDLHDVGELTPTVAALAALADGPSHLRGIAHLRGHETDRLAALAHEINSLGGNVTETEDGLTIVPAGLHGGTWRSYADHRMATAGAIVGLRVDGIRIEDVGTTAKTLPGFENLWATMLSAAAGTERKASF</sequence>
<name>AROA_RHOJR</name>
<organism>
    <name type="scientific">Rhodococcus jostii (strain RHA1)</name>
    <dbReference type="NCBI Taxonomy" id="101510"/>
    <lineage>
        <taxon>Bacteria</taxon>
        <taxon>Bacillati</taxon>
        <taxon>Actinomycetota</taxon>
        <taxon>Actinomycetes</taxon>
        <taxon>Mycobacteriales</taxon>
        <taxon>Nocardiaceae</taxon>
        <taxon>Rhodococcus</taxon>
    </lineage>
</organism>
<comment type="function">
    <text evidence="1">Catalyzes the transfer of the enolpyruvyl moiety of phosphoenolpyruvate (PEP) to the 5-hydroxyl of shikimate-3-phosphate (S3P) to produce enolpyruvyl shikimate-3-phosphate and inorganic phosphate.</text>
</comment>
<comment type="catalytic activity">
    <reaction evidence="1">
        <text>3-phosphoshikimate + phosphoenolpyruvate = 5-O-(1-carboxyvinyl)-3-phosphoshikimate + phosphate</text>
        <dbReference type="Rhea" id="RHEA:21256"/>
        <dbReference type="ChEBI" id="CHEBI:43474"/>
        <dbReference type="ChEBI" id="CHEBI:57701"/>
        <dbReference type="ChEBI" id="CHEBI:58702"/>
        <dbReference type="ChEBI" id="CHEBI:145989"/>
        <dbReference type="EC" id="2.5.1.19"/>
    </reaction>
    <physiologicalReaction direction="left-to-right" evidence="1">
        <dbReference type="Rhea" id="RHEA:21257"/>
    </physiologicalReaction>
</comment>
<comment type="pathway">
    <text evidence="1">Metabolic intermediate biosynthesis; chorismate biosynthesis; chorismate from D-erythrose 4-phosphate and phosphoenolpyruvate: step 6/7.</text>
</comment>
<comment type="subunit">
    <text evidence="1">Monomer.</text>
</comment>
<comment type="subcellular location">
    <subcellularLocation>
        <location evidence="1">Cytoplasm</location>
    </subcellularLocation>
</comment>
<comment type="similarity">
    <text evidence="1">Belongs to the EPSP synthase family.</text>
</comment>
<feature type="chain" id="PRO_0000325378" description="3-phosphoshikimate 1-carboxyvinyltransferase">
    <location>
        <begin position="1"/>
        <end position="438"/>
    </location>
</feature>
<feature type="active site" description="Proton acceptor" evidence="1">
    <location>
        <position position="316"/>
    </location>
</feature>
<feature type="binding site" evidence="1">
    <location>
        <position position="28"/>
    </location>
    <ligand>
        <name>3-phosphoshikimate</name>
        <dbReference type="ChEBI" id="CHEBI:145989"/>
    </ligand>
</feature>
<feature type="binding site" evidence="1">
    <location>
        <position position="28"/>
    </location>
    <ligand>
        <name>phosphoenolpyruvate</name>
        <dbReference type="ChEBI" id="CHEBI:58702"/>
    </ligand>
</feature>
<feature type="binding site" evidence="1">
    <location>
        <position position="29"/>
    </location>
    <ligand>
        <name>3-phosphoshikimate</name>
        <dbReference type="ChEBI" id="CHEBI:145989"/>
    </ligand>
</feature>
<feature type="binding site" evidence="1">
    <location>
        <position position="33"/>
    </location>
    <ligand>
        <name>3-phosphoshikimate</name>
        <dbReference type="ChEBI" id="CHEBI:145989"/>
    </ligand>
</feature>
<feature type="binding site" evidence="1">
    <location>
        <position position="97"/>
    </location>
    <ligand>
        <name>phosphoenolpyruvate</name>
        <dbReference type="ChEBI" id="CHEBI:58702"/>
    </ligand>
</feature>
<feature type="binding site" evidence="1">
    <location>
        <position position="125"/>
    </location>
    <ligand>
        <name>phosphoenolpyruvate</name>
        <dbReference type="ChEBI" id="CHEBI:58702"/>
    </ligand>
</feature>
<feature type="binding site" evidence="1">
    <location>
        <position position="168"/>
    </location>
    <ligand>
        <name>3-phosphoshikimate</name>
        <dbReference type="ChEBI" id="CHEBI:145989"/>
    </ligand>
</feature>
<feature type="binding site" evidence="1">
    <location>
        <position position="169"/>
    </location>
    <ligand>
        <name>3-phosphoshikimate</name>
        <dbReference type="ChEBI" id="CHEBI:145989"/>
    </ligand>
</feature>
<feature type="binding site" evidence="1">
    <location>
        <position position="170"/>
    </location>
    <ligand>
        <name>3-phosphoshikimate</name>
        <dbReference type="ChEBI" id="CHEBI:145989"/>
    </ligand>
</feature>
<feature type="binding site" evidence="1">
    <location>
        <position position="170"/>
    </location>
    <ligand>
        <name>phosphoenolpyruvate</name>
        <dbReference type="ChEBI" id="CHEBI:58702"/>
    </ligand>
</feature>
<feature type="binding site" evidence="1">
    <location>
        <position position="316"/>
    </location>
    <ligand>
        <name>3-phosphoshikimate</name>
        <dbReference type="ChEBI" id="CHEBI:145989"/>
    </ligand>
</feature>
<feature type="binding site" evidence="1">
    <location>
        <position position="343"/>
    </location>
    <ligand>
        <name>3-phosphoshikimate</name>
        <dbReference type="ChEBI" id="CHEBI:145989"/>
    </ligand>
</feature>
<feature type="binding site" evidence="1">
    <location>
        <position position="347"/>
    </location>
    <ligand>
        <name>phosphoenolpyruvate</name>
        <dbReference type="ChEBI" id="CHEBI:58702"/>
    </ligand>
</feature>
<feature type="binding site" evidence="1">
    <location>
        <position position="388"/>
    </location>
    <ligand>
        <name>phosphoenolpyruvate</name>
        <dbReference type="ChEBI" id="CHEBI:58702"/>
    </ligand>
</feature>
<feature type="binding site" evidence="1">
    <location>
        <position position="413"/>
    </location>
    <ligand>
        <name>phosphoenolpyruvate</name>
        <dbReference type="ChEBI" id="CHEBI:58702"/>
    </ligand>
</feature>
<gene>
    <name evidence="1" type="primary">aroA</name>
    <name type="ordered locus">RHA1_ro06338</name>
</gene>
<keyword id="KW-0028">Amino-acid biosynthesis</keyword>
<keyword id="KW-0057">Aromatic amino acid biosynthesis</keyword>
<keyword id="KW-0963">Cytoplasm</keyword>
<keyword id="KW-0808">Transferase</keyword>
<dbReference type="EC" id="2.5.1.19" evidence="1"/>
<dbReference type="EMBL" id="CP000431">
    <property type="protein sequence ID" value="ABG98115.1"/>
    <property type="molecule type" value="Genomic_DNA"/>
</dbReference>
<dbReference type="RefSeq" id="WP_011598270.1">
    <property type="nucleotide sequence ID" value="NC_008268.1"/>
</dbReference>
<dbReference type="SMR" id="Q0S2X1"/>
<dbReference type="KEGG" id="rha:RHA1_ro06338"/>
<dbReference type="PATRIC" id="fig|101510.16.peg.6389"/>
<dbReference type="eggNOG" id="COG0128">
    <property type="taxonomic scope" value="Bacteria"/>
</dbReference>
<dbReference type="HOGENOM" id="CLU_024321_0_0_11"/>
<dbReference type="OrthoDB" id="9809920at2"/>
<dbReference type="UniPathway" id="UPA00053">
    <property type="reaction ID" value="UER00089"/>
</dbReference>
<dbReference type="Proteomes" id="UP000008710">
    <property type="component" value="Chromosome"/>
</dbReference>
<dbReference type="GO" id="GO:0005737">
    <property type="term" value="C:cytoplasm"/>
    <property type="evidence" value="ECO:0007669"/>
    <property type="project" value="UniProtKB-SubCell"/>
</dbReference>
<dbReference type="GO" id="GO:0003866">
    <property type="term" value="F:3-phosphoshikimate 1-carboxyvinyltransferase activity"/>
    <property type="evidence" value="ECO:0007669"/>
    <property type="project" value="UniProtKB-UniRule"/>
</dbReference>
<dbReference type="GO" id="GO:0008652">
    <property type="term" value="P:amino acid biosynthetic process"/>
    <property type="evidence" value="ECO:0007669"/>
    <property type="project" value="UniProtKB-KW"/>
</dbReference>
<dbReference type="GO" id="GO:0009073">
    <property type="term" value="P:aromatic amino acid family biosynthetic process"/>
    <property type="evidence" value="ECO:0007669"/>
    <property type="project" value="UniProtKB-KW"/>
</dbReference>
<dbReference type="GO" id="GO:0009423">
    <property type="term" value="P:chorismate biosynthetic process"/>
    <property type="evidence" value="ECO:0007669"/>
    <property type="project" value="UniProtKB-UniRule"/>
</dbReference>
<dbReference type="CDD" id="cd01556">
    <property type="entry name" value="EPSP_synthase"/>
    <property type="match status" value="1"/>
</dbReference>
<dbReference type="FunFam" id="3.65.10.10:FF:000010">
    <property type="entry name" value="3-phosphoshikimate 1-carboxyvinyltransferase"/>
    <property type="match status" value="1"/>
</dbReference>
<dbReference type="FunFam" id="3.65.10.10:FF:000011">
    <property type="entry name" value="3-phosphoshikimate 1-carboxyvinyltransferase"/>
    <property type="match status" value="1"/>
</dbReference>
<dbReference type="Gene3D" id="3.65.10.10">
    <property type="entry name" value="Enolpyruvate transferase domain"/>
    <property type="match status" value="2"/>
</dbReference>
<dbReference type="HAMAP" id="MF_00210">
    <property type="entry name" value="EPSP_synth"/>
    <property type="match status" value="1"/>
</dbReference>
<dbReference type="InterPro" id="IPR001986">
    <property type="entry name" value="Enolpyruvate_Tfrase_dom"/>
</dbReference>
<dbReference type="InterPro" id="IPR036968">
    <property type="entry name" value="Enolpyruvate_Tfrase_sf"/>
</dbReference>
<dbReference type="InterPro" id="IPR006264">
    <property type="entry name" value="EPSP_synthase"/>
</dbReference>
<dbReference type="InterPro" id="IPR023193">
    <property type="entry name" value="EPSP_synthase_CS"/>
</dbReference>
<dbReference type="InterPro" id="IPR013792">
    <property type="entry name" value="RNA3'P_cycl/enolpyr_Trfase_a/b"/>
</dbReference>
<dbReference type="NCBIfam" id="TIGR01356">
    <property type="entry name" value="aroA"/>
    <property type="match status" value="1"/>
</dbReference>
<dbReference type="PANTHER" id="PTHR21090">
    <property type="entry name" value="AROM/DEHYDROQUINATE SYNTHASE"/>
    <property type="match status" value="1"/>
</dbReference>
<dbReference type="PANTHER" id="PTHR21090:SF5">
    <property type="entry name" value="PENTAFUNCTIONAL AROM POLYPEPTIDE"/>
    <property type="match status" value="1"/>
</dbReference>
<dbReference type="Pfam" id="PF00275">
    <property type="entry name" value="EPSP_synthase"/>
    <property type="match status" value="1"/>
</dbReference>
<dbReference type="PIRSF" id="PIRSF000505">
    <property type="entry name" value="EPSPS"/>
    <property type="match status" value="1"/>
</dbReference>
<dbReference type="SUPFAM" id="SSF55205">
    <property type="entry name" value="EPT/RTPC-like"/>
    <property type="match status" value="1"/>
</dbReference>
<dbReference type="PROSITE" id="PS00104">
    <property type="entry name" value="EPSP_SYNTHASE_1"/>
    <property type="match status" value="1"/>
</dbReference>
<dbReference type="PROSITE" id="PS00885">
    <property type="entry name" value="EPSP_SYNTHASE_2"/>
    <property type="match status" value="1"/>
</dbReference>
<evidence type="ECO:0000255" key="1">
    <source>
        <dbReference type="HAMAP-Rule" id="MF_00210"/>
    </source>
</evidence>
<reference key="1">
    <citation type="journal article" date="2006" name="Proc. Natl. Acad. Sci. U.S.A.">
        <title>The complete genome of Rhodococcus sp. RHA1 provides insights into a catabolic powerhouse.</title>
        <authorList>
            <person name="McLeod M.P."/>
            <person name="Warren R.L."/>
            <person name="Hsiao W.W.L."/>
            <person name="Araki N."/>
            <person name="Myhre M."/>
            <person name="Fernandes C."/>
            <person name="Miyazawa D."/>
            <person name="Wong W."/>
            <person name="Lillquist A.L."/>
            <person name="Wang D."/>
            <person name="Dosanjh M."/>
            <person name="Hara H."/>
            <person name="Petrescu A."/>
            <person name="Morin R.D."/>
            <person name="Yang G."/>
            <person name="Stott J.M."/>
            <person name="Schein J.E."/>
            <person name="Shin H."/>
            <person name="Smailus D."/>
            <person name="Siddiqui A.S."/>
            <person name="Marra M.A."/>
            <person name="Jones S.J.M."/>
            <person name="Holt R."/>
            <person name="Brinkman F.S.L."/>
            <person name="Miyauchi K."/>
            <person name="Fukuda M."/>
            <person name="Davies J.E."/>
            <person name="Mohn W.W."/>
            <person name="Eltis L.D."/>
        </authorList>
    </citation>
    <scope>NUCLEOTIDE SEQUENCE [LARGE SCALE GENOMIC DNA]</scope>
    <source>
        <strain>RHA1</strain>
    </source>
</reference>
<protein>
    <recommendedName>
        <fullName evidence="1">3-phosphoshikimate 1-carboxyvinyltransferase</fullName>
        <ecNumber evidence="1">2.5.1.19</ecNumber>
    </recommendedName>
    <alternativeName>
        <fullName evidence="1">5-enolpyruvylshikimate-3-phosphate synthase</fullName>
        <shortName evidence="1">EPSP synthase</shortName>
        <shortName evidence="1">EPSPS</shortName>
    </alternativeName>
</protein>